<reference key="1">
    <citation type="journal article" date="2004" name="Nucleic Acids Res.">
        <title>The genome sequence of Bacillus cereus ATCC 10987 reveals metabolic adaptations and a large plasmid related to Bacillus anthracis pXO1.</title>
        <authorList>
            <person name="Rasko D.A."/>
            <person name="Ravel J."/>
            <person name="Oekstad O.A."/>
            <person name="Helgason E."/>
            <person name="Cer R.Z."/>
            <person name="Jiang L."/>
            <person name="Shores K.A."/>
            <person name="Fouts D.E."/>
            <person name="Tourasse N.J."/>
            <person name="Angiuoli S.V."/>
            <person name="Kolonay J.F."/>
            <person name="Nelson W.C."/>
            <person name="Kolstoe A.-B."/>
            <person name="Fraser C.M."/>
            <person name="Read T.D."/>
        </authorList>
    </citation>
    <scope>NUCLEOTIDE SEQUENCE [LARGE SCALE GENOMIC DNA]</scope>
    <source>
        <strain>ATCC 10987 / NRS 248</strain>
    </source>
</reference>
<feature type="chain" id="PRO_0000139099" description="Methionine--tRNA ligase 1">
    <location>
        <begin position="1"/>
        <end position="544"/>
    </location>
</feature>
<feature type="short sequence motif" description="'HIGH' region">
    <location>
        <begin position="10"/>
        <end position="20"/>
    </location>
</feature>
<feature type="short sequence motif" description="'KMSKS' region">
    <location>
        <begin position="329"/>
        <end position="333"/>
    </location>
</feature>
<feature type="binding site" evidence="1">
    <location>
        <position position="141"/>
    </location>
    <ligand>
        <name>Zn(2+)</name>
        <dbReference type="ChEBI" id="CHEBI:29105"/>
    </ligand>
</feature>
<feature type="binding site" evidence="1">
    <location>
        <position position="144"/>
    </location>
    <ligand>
        <name>Zn(2+)</name>
        <dbReference type="ChEBI" id="CHEBI:29105"/>
    </ligand>
</feature>
<feature type="binding site" evidence="1">
    <location>
        <position position="153"/>
    </location>
    <ligand>
        <name>Zn(2+)</name>
        <dbReference type="ChEBI" id="CHEBI:29105"/>
    </ligand>
</feature>
<feature type="binding site" evidence="1">
    <location>
        <position position="156"/>
    </location>
    <ligand>
        <name>Zn(2+)</name>
        <dbReference type="ChEBI" id="CHEBI:29105"/>
    </ligand>
</feature>
<feature type="binding site" evidence="1">
    <location>
        <position position="332"/>
    </location>
    <ligand>
        <name>ATP</name>
        <dbReference type="ChEBI" id="CHEBI:30616"/>
    </ligand>
</feature>
<evidence type="ECO:0000255" key="1">
    <source>
        <dbReference type="HAMAP-Rule" id="MF_00098"/>
    </source>
</evidence>
<name>SYM1_BACC1</name>
<protein>
    <recommendedName>
        <fullName evidence="1">Methionine--tRNA ligase 1</fullName>
        <ecNumber evidence="1">6.1.1.10</ecNumber>
    </recommendedName>
    <alternativeName>
        <fullName evidence="1">Methionyl-tRNA synthetase 1</fullName>
        <shortName evidence="1">MetRS 1</shortName>
    </alternativeName>
</protein>
<organism>
    <name type="scientific">Bacillus cereus (strain ATCC 10987 / NRS 248)</name>
    <dbReference type="NCBI Taxonomy" id="222523"/>
    <lineage>
        <taxon>Bacteria</taxon>
        <taxon>Bacillati</taxon>
        <taxon>Bacillota</taxon>
        <taxon>Bacilli</taxon>
        <taxon>Bacillales</taxon>
        <taxon>Bacillaceae</taxon>
        <taxon>Bacillus</taxon>
        <taxon>Bacillus cereus group</taxon>
    </lineage>
</organism>
<accession>Q72Y44</accession>
<comment type="function">
    <text evidence="1">Is required not only for elongation of protein synthesis but also for the initiation of all mRNA translation through initiator tRNA(fMet) aminoacylation.</text>
</comment>
<comment type="catalytic activity">
    <reaction evidence="1">
        <text>tRNA(Met) + L-methionine + ATP = L-methionyl-tRNA(Met) + AMP + diphosphate</text>
        <dbReference type="Rhea" id="RHEA:13481"/>
        <dbReference type="Rhea" id="RHEA-COMP:9667"/>
        <dbReference type="Rhea" id="RHEA-COMP:9698"/>
        <dbReference type="ChEBI" id="CHEBI:30616"/>
        <dbReference type="ChEBI" id="CHEBI:33019"/>
        <dbReference type="ChEBI" id="CHEBI:57844"/>
        <dbReference type="ChEBI" id="CHEBI:78442"/>
        <dbReference type="ChEBI" id="CHEBI:78530"/>
        <dbReference type="ChEBI" id="CHEBI:456215"/>
        <dbReference type="EC" id="6.1.1.10"/>
    </reaction>
</comment>
<comment type="cofactor">
    <cofactor evidence="1">
        <name>Zn(2+)</name>
        <dbReference type="ChEBI" id="CHEBI:29105"/>
    </cofactor>
    <text evidence="1">Binds 1 zinc ion per subunit.</text>
</comment>
<comment type="subunit">
    <text evidence="1">Monomer.</text>
</comment>
<comment type="subcellular location">
    <subcellularLocation>
        <location evidence="1">Cytoplasm</location>
    </subcellularLocation>
</comment>
<comment type="similarity">
    <text evidence="1">Belongs to the class-I aminoacyl-tRNA synthetase family. MetG type 1 subfamily.</text>
</comment>
<gene>
    <name evidence="1" type="primary">metG1</name>
    <name type="ordered locus">BCE_5177</name>
</gene>
<keyword id="KW-0030">Aminoacyl-tRNA synthetase</keyword>
<keyword id="KW-0067">ATP-binding</keyword>
<keyword id="KW-0963">Cytoplasm</keyword>
<keyword id="KW-0436">Ligase</keyword>
<keyword id="KW-0479">Metal-binding</keyword>
<keyword id="KW-0547">Nucleotide-binding</keyword>
<keyword id="KW-0648">Protein biosynthesis</keyword>
<keyword id="KW-0862">Zinc</keyword>
<sequence length="544" mass="62744">MSIFIGGAWPYANGSLHLGHIASLLPGDILARYYRAKGENVLYVSGSDCNGTPIAIRAKQEGVTAKEIANKYHEEFQRCFRNLGFTYDCYTRTDSEHHHKTVQKVFLRLLEEGHIYKKTVEQAYCETCTQFLPDRYVEGICPHCHEAARGDQCDACSAILDPLDLLEKKCKLCGSAPSVQETEHFYFALHTFQEQIKVAVETAKQTGTWRDNAIQLTERYVKEGLLDRAVSRDLPIGVPIPVEGYEDKKIYVWIEAVTGYYSASKHWAEKTGKDDQEFWDREAKTYYVHGKDNIPFHSIIWPAVLLGIGEGTIPRHIVSNEYLTVEKRKLSTSKNWAVWVPDILERYDPDSIRYFLTVNAPENRDTDFSWREFIYSHNSELLGAYGNFVNRTLKFIEKYYGGIVPKGSIDVELKDKIEGLYKHVGEAIEQTKFKVALEAIFDAVRFANKYFDERQPWKEREDDPVSCEETIYNCVYLIANFVNLLEPFLPFSSERVRNTLSIVKRNWEPQNTLPNRIDSVQPLFERIDVKQIECEIEKLYGAVK</sequence>
<dbReference type="EC" id="6.1.1.10" evidence="1"/>
<dbReference type="EMBL" id="AE017194">
    <property type="protein sequence ID" value="AAS44078.1"/>
    <property type="molecule type" value="Genomic_DNA"/>
</dbReference>
<dbReference type="SMR" id="Q72Y44"/>
<dbReference type="KEGG" id="bca:BCE_5177"/>
<dbReference type="HOGENOM" id="CLU_009710_1_2_9"/>
<dbReference type="Proteomes" id="UP000002527">
    <property type="component" value="Chromosome"/>
</dbReference>
<dbReference type="GO" id="GO:0005829">
    <property type="term" value="C:cytosol"/>
    <property type="evidence" value="ECO:0007669"/>
    <property type="project" value="TreeGrafter"/>
</dbReference>
<dbReference type="GO" id="GO:0005524">
    <property type="term" value="F:ATP binding"/>
    <property type="evidence" value="ECO:0007669"/>
    <property type="project" value="UniProtKB-UniRule"/>
</dbReference>
<dbReference type="GO" id="GO:0046872">
    <property type="term" value="F:metal ion binding"/>
    <property type="evidence" value="ECO:0007669"/>
    <property type="project" value="UniProtKB-KW"/>
</dbReference>
<dbReference type="GO" id="GO:0004825">
    <property type="term" value="F:methionine-tRNA ligase activity"/>
    <property type="evidence" value="ECO:0007669"/>
    <property type="project" value="UniProtKB-UniRule"/>
</dbReference>
<dbReference type="GO" id="GO:0006431">
    <property type="term" value="P:methionyl-tRNA aminoacylation"/>
    <property type="evidence" value="ECO:0007669"/>
    <property type="project" value="UniProtKB-UniRule"/>
</dbReference>
<dbReference type="CDD" id="cd07957">
    <property type="entry name" value="Anticodon_Ia_Met"/>
    <property type="match status" value="1"/>
</dbReference>
<dbReference type="CDD" id="cd00814">
    <property type="entry name" value="MetRS_core"/>
    <property type="match status" value="1"/>
</dbReference>
<dbReference type="FunFam" id="1.10.730.10:FF:000041">
    <property type="entry name" value="Methionine--tRNA ligase"/>
    <property type="match status" value="1"/>
</dbReference>
<dbReference type="FunFam" id="2.20.28.20:FF:000001">
    <property type="entry name" value="Methionine--tRNA ligase"/>
    <property type="match status" value="1"/>
</dbReference>
<dbReference type="Gene3D" id="3.40.50.620">
    <property type="entry name" value="HUPs"/>
    <property type="match status" value="1"/>
</dbReference>
<dbReference type="Gene3D" id="1.10.730.10">
    <property type="entry name" value="Isoleucyl-tRNA Synthetase, Domain 1"/>
    <property type="match status" value="1"/>
</dbReference>
<dbReference type="Gene3D" id="2.20.28.20">
    <property type="entry name" value="Methionyl-tRNA synthetase, Zn-domain"/>
    <property type="match status" value="1"/>
</dbReference>
<dbReference type="HAMAP" id="MF_00098">
    <property type="entry name" value="Met_tRNA_synth_type1"/>
    <property type="match status" value="1"/>
</dbReference>
<dbReference type="InterPro" id="IPR001412">
    <property type="entry name" value="aa-tRNA-synth_I_CS"/>
</dbReference>
<dbReference type="InterPro" id="IPR041872">
    <property type="entry name" value="Anticodon_Met"/>
</dbReference>
<dbReference type="InterPro" id="IPR013155">
    <property type="entry name" value="M/V/L/I-tRNA-synth_anticd-bd"/>
</dbReference>
<dbReference type="InterPro" id="IPR023458">
    <property type="entry name" value="Met-tRNA_ligase_1"/>
</dbReference>
<dbReference type="InterPro" id="IPR014758">
    <property type="entry name" value="Met-tRNA_synth"/>
</dbReference>
<dbReference type="InterPro" id="IPR015413">
    <property type="entry name" value="Methionyl/Leucyl_tRNA_Synth"/>
</dbReference>
<dbReference type="InterPro" id="IPR033911">
    <property type="entry name" value="MetRS_core"/>
</dbReference>
<dbReference type="InterPro" id="IPR029038">
    <property type="entry name" value="MetRS_Zn"/>
</dbReference>
<dbReference type="InterPro" id="IPR014729">
    <property type="entry name" value="Rossmann-like_a/b/a_fold"/>
</dbReference>
<dbReference type="InterPro" id="IPR009080">
    <property type="entry name" value="tRNAsynth_Ia_anticodon-bd"/>
</dbReference>
<dbReference type="NCBIfam" id="TIGR00398">
    <property type="entry name" value="metG"/>
    <property type="match status" value="1"/>
</dbReference>
<dbReference type="PANTHER" id="PTHR45765">
    <property type="entry name" value="METHIONINE--TRNA LIGASE"/>
    <property type="match status" value="1"/>
</dbReference>
<dbReference type="PANTHER" id="PTHR45765:SF1">
    <property type="entry name" value="METHIONINE--TRNA LIGASE, CYTOPLASMIC"/>
    <property type="match status" value="1"/>
</dbReference>
<dbReference type="Pfam" id="PF08264">
    <property type="entry name" value="Anticodon_1"/>
    <property type="match status" value="1"/>
</dbReference>
<dbReference type="Pfam" id="PF09334">
    <property type="entry name" value="tRNA-synt_1g"/>
    <property type="match status" value="1"/>
</dbReference>
<dbReference type="PRINTS" id="PR01041">
    <property type="entry name" value="TRNASYNTHMET"/>
</dbReference>
<dbReference type="SUPFAM" id="SSF47323">
    <property type="entry name" value="Anticodon-binding domain of a subclass of class I aminoacyl-tRNA synthetases"/>
    <property type="match status" value="1"/>
</dbReference>
<dbReference type="SUPFAM" id="SSF57770">
    <property type="entry name" value="Methionyl-tRNA synthetase (MetRS), Zn-domain"/>
    <property type="match status" value="1"/>
</dbReference>
<dbReference type="SUPFAM" id="SSF52374">
    <property type="entry name" value="Nucleotidylyl transferase"/>
    <property type="match status" value="1"/>
</dbReference>
<dbReference type="PROSITE" id="PS00178">
    <property type="entry name" value="AA_TRNA_LIGASE_I"/>
    <property type="match status" value="1"/>
</dbReference>
<proteinExistence type="inferred from homology"/>